<sequence>MPAYRSRTTTHGRNMAGARGLWRATGMKDSDFGKPIIAVVNSFTQFVPGHVHLKDLGQLVAREIEAAGGVAKEFNTIAVDDGIAMGHDGMLYSLPSREIIADSVEYMVNAHCADAMVCISNCDKITPGMLMAALRLNIPAVFVSGGPMEAGKVVLHGKKHALDLVDAMVAAADDSVSDEDVKVIERSACPTCGSCSGMFTANSMNCLTEALGLSLPGNGSTLATHADRKRLFVEAGHLVVDLARRYYEQEDERILPRSVASKKAFENAMALDIAMGGSTNTVLHILAAAYEGEVDFTMDDIDRLSRKVPCLSKVAPAKSDVHMEDVHRAGGIMSILGELEKGGLINRDCPTVHSETIGDAIDRWDITRTSSETVRNFFRAAPGGIPTQVAFSQEARWDDLDTDREKGVIRSVEHPFSKDGGLAVLKGNIALDGCIVKTAGVDESILKFSGPARVFESQDASVKAILGNEIKAGDVVVIRYEGPKGGPGMQEMLYPTSYLKSKGLGKACALITDGRFSGGTSGLSIGHVSPEAANGGTIGLVREGDIIDIDIPNRTISLRVDEAELATRRAEQDAKGWQPAEQRKRRVTTALKAYAAFATSADRGAVRDLGDR</sequence>
<evidence type="ECO:0000255" key="1">
    <source>
        <dbReference type="HAMAP-Rule" id="MF_00012"/>
    </source>
</evidence>
<reference key="1">
    <citation type="journal article" date="2009" name="Appl. Environ. Microbiol.">
        <title>Rhizobium sp. strain NGR234 possesses a remarkable number of secretion systems.</title>
        <authorList>
            <person name="Schmeisser C."/>
            <person name="Liesegang H."/>
            <person name="Krysciak D."/>
            <person name="Bakkou N."/>
            <person name="Le Quere A."/>
            <person name="Wollherr A."/>
            <person name="Heinemeyer I."/>
            <person name="Morgenstern B."/>
            <person name="Pommerening-Roeser A."/>
            <person name="Flores M."/>
            <person name="Palacios R."/>
            <person name="Brenner S."/>
            <person name="Gottschalk G."/>
            <person name="Schmitz R.A."/>
            <person name="Broughton W.J."/>
            <person name="Perret X."/>
            <person name="Strittmatter A.W."/>
            <person name="Streit W.R."/>
        </authorList>
    </citation>
    <scope>NUCLEOTIDE SEQUENCE [LARGE SCALE GENOMIC DNA]</scope>
    <source>
        <strain>NBRC 101917 / NGR234</strain>
    </source>
</reference>
<feature type="chain" id="PRO_1000116524" description="Dihydroxy-acid dehydratase">
    <location>
        <begin position="1"/>
        <end position="612"/>
    </location>
</feature>
<feature type="active site" description="Proton acceptor" evidence="1">
    <location>
        <position position="517"/>
    </location>
</feature>
<feature type="binding site" evidence="1">
    <location>
        <position position="81"/>
    </location>
    <ligand>
        <name>Mg(2+)</name>
        <dbReference type="ChEBI" id="CHEBI:18420"/>
    </ligand>
</feature>
<feature type="binding site" evidence="1">
    <location>
        <position position="122"/>
    </location>
    <ligand>
        <name>[2Fe-2S] cluster</name>
        <dbReference type="ChEBI" id="CHEBI:190135"/>
    </ligand>
</feature>
<feature type="binding site" evidence="1">
    <location>
        <position position="123"/>
    </location>
    <ligand>
        <name>Mg(2+)</name>
        <dbReference type="ChEBI" id="CHEBI:18420"/>
    </ligand>
</feature>
<feature type="binding site" description="via carbamate group" evidence="1">
    <location>
        <position position="124"/>
    </location>
    <ligand>
        <name>Mg(2+)</name>
        <dbReference type="ChEBI" id="CHEBI:18420"/>
    </ligand>
</feature>
<feature type="binding site" evidence="1">
    <location>
        <position position="195"/>
    </location>
    <ligand>
        <name>[2Fe-2S] cluster</name>
        <dbReference type="ChEBI" id="CHEBI:190135"/>
    </ligand>
</feature>
<feature type="binding site" evidence="1">
    <location>
        <position position="491"/>
    </location>
    <ligand>
        <name>Mg(2+)</name>
        <dbReference type="ChEBI" id="CHEBI:18420"/>
    </ligand>
</feature>
<feature type="modified residue" description="N6-carboxylysine" evidence="1">
    <location>
        <position position="124"/>
    </location>
</feature>
<gene>
    <name evidence="1" type="primary">ilvD</name>
    <name type="ordered locus">NGR_c28820</name>
</gene>
<comment type="function">
    <text evidence="1">Functions in the biosynthesis of branched-chain amino acids. Catalyzes the dehydration of (2R,3R)-2,3-dihydroxy-3-methylpentanoate (2,3-dihydroxy-3-methylvalerate) into 2-oxo-3-methylpentanoate (2-oxo-3-methylvalerate) and of (2R)-2,3-dihydroxy-3-methylbutanoate (2,3-dihydroxyisovalerate) into 2-oxo-3-methylbutanoate (2-oxoisovalerate), the penultimate precursor to L-isoleucine and L-valine, respectively.</text>
</comment>
<comment type="catalytic activity">
    <reaction evidence="1">
        <text>(2R)-2,3-dihydroxy-3-methylbutanoate = 3-methyl-2-oxobutanoate + H2O</text>
        <dbReference type="Rhea" id="RHEA:24809"/>
        <dbReference type="ChEBI" id="CHEBI:11851"/>
        <dbReference type="ChEBI" id="CHEBI:15377"/>
        <dbReference type="ChEBI" id="CHEBI:49072"/>
        <dbReference type="EC" id="4.2.1.9"/>
    </reaction>
    <physiologicalReaction direction="left-to-right" evidence="1">
        <dbReference type="Rhea" id="RHEA:24810"/>
    </physiologicalReaction>
</comment>
<comment type="catalytic activity">
    <reaction evidence="1">
        <text>(2R,3R)-2,3-dihydroxy-3-methylpentanoate = (S)-3-methyl-2-oxopentanoate + H2O</text>
        <dbReference type="Rhea" id="RHEA:27694"/>
        <dbReference type="ChEBI" id="CHEBI:15377"/>
        <dbReference type="ChEBI" id="CHEBI:35146"/>
        <dbReference type="ChEBI" id="CHEBI:49258"/>
        <dbReference type="EC" id="4.2.1.9"/>
    </reaction>
    <physiologicalReaction direction="left-to-right" evidence="1">
        <dbReference type="Rhea" id="RHEA:27695"/>
    </physiologicalReaction>
</comment>
<comment type="cofactor">
    <cofactor evidence="1">
        <name>[2Fe-2S] cluster</name>
        <dbReference type="ChEBI" id="CHEBI:190135"/>
    </cofactor>
    <text evidence="1">Binds 1 [2Fe-2S] cluster per subunit. This cluster acts as a Lewis acid cofactor.</text>
</comment>
<comment type="cofactor">
    <cofactor evidence="1">
        <name>Mg(2+)</name>
        <dbReference type="ChEBI" id="CHEBI:18420"/>
    </cofactor>
</comment>
<comment type="pathway">
    <text evidence="1">Amino-acid biosynthesis; L-isoleucine biosynthesis; L-isoleucine from 2-oxobutanoate: step 3/4.</text>
</comment>
<comment type="pathway">
    <text evidence="1">Amino-acid biosynthesis; L-valine biosynthesis; L-valine from pyruvate: step 3/4.</text>
</comment>
<comment type="subunit">
    <text evidence="1">Homodimer.</text>
</comment>
<comment type="similarity">
    <text evidence="1">Belongs to the IlvD/Edd family.</text>
</comment>
<protein>
    <recommendedName>
        <fullName evidence="1">Dihydroxy-acid dehydratase</fullName>
        <shortName evidence="1">DAD</shortName>
        <ecNumber evidence="1">4.2.1.9</ecNumber>
    </recommendedName>
</protein>
<keyword id="KW-0001">2Fe-2S</keyword>
<keyword id="KW-0028">Amino-acid biosynthesis</keyword>
<keyword id="KW-0100">Branched-chain amino acid biosynthesis</keyword>
<keyword id="KW-0408">Iron</keyword>
<keyword id="KW-0411">Iron-sulfur</keyword>
<keyword id="KW-0456">Lyase</keyword>
<keyword id="KW-0460">Magnesium</keyword>
<keyword id="KW-0479">Metal-binding</keyword>
<keyword id="KW-1185">Reference proteome</keyword>
<organism>
    <name type="scientific">Sinorhizobium fredii (strain NBRC 101917 / NGR234)</name>
    <dbReference type="NCBI Taxonomy" id="394"/>
    <lineage>
        <taxon>Bacteria</taxon>
        <taxon>Pseudomonadati</taxon>
        <taxon>Pseudomonadota</taxon>
        <taxon>Alphaproteobacteria</taxon>
        <taxon>Hyphomicrobiales</taxon>
        <taxon>Rhizobiaceae</taxon>
        <taxon>Sinorhizobium/Ensifer group</taxon>
        <taxon>Sinorhizobium</taxon>
    </lineage>
</organism>
<name>ILVD_SINFN</name>
<proteinExistence type="inferred from homology"/>
<dbReference type="EC" id="4.2.1.9" evidence="1"/>
<dbReference type="EMBL" id="CP001389">
    <property type="protein sequence ID" value="ACP26626.1"/>
    <property type="molecule type" value="Genomic_DNA"/>
</dbReference>
<dbReference type="RefSeq" id="WP_012709381.1">
    <property type="nucleotide sequence ID" value="NC_012587.1"/>
</dbReference>
<dbReference type="RefSeq" id="YP_002827379.1">
    <property type="nucleotide sequence ID" value="NC_012587.1"/>
</dbReference>
<dbReference type="SMR" id="C3MIR3"/>
<dbReference type="STRING" id="394.NGR_c28820"/>
<dbReference type="KEGG" id="rhi:NGR_c28820"/>
<dbReference type="PATRIC" id="fig|394.7.peg.5718"/>
<dbReference type="eggNOG" id="COG0129">
    <property type="taxonomic scope" value="Bacteria"/>
</dbReference>
<dbReference type="HOGENOM" id="CLU_014271_4_2_5"/>
<dbReference type="OrthoDB" id="9807077at2"/>
<dbReference type="UniPathway" id="UPA00047">
    <property type="reaction ID" value="UER00057"/>
</dbReference>
<dbReference type="UniPathway" id="UPA00049">
    <property type="reaction ID" value="UER00061"/>
</dbReference>
<dbReference type="Proteomes" id="UP000001054">
    <property type="component" value="Chromosome"/>
</dbReference>
<dbReference type="GO" id="GO:0005829">
    <property type="term" value="C:cytosol"/>
    <property type="evidence" value="ECO:0007669"/>
    <property type="project" value="TreeGrafter"/>
</dbReference>
<dbReference type="GO" id="GO:0051537">
    <property type="term" value="F:2 iron, 2 sulfur cluster binding"/>
    <property type="evidence" value="ECO:0007669"/>
    <property type="project" value="UniProtKB-UniRule"/>
</dbReference>
<dbReference type="GO" id="GO:0004160">
    <property type="term" value="F:dihydroxy-acid dehydratase activity"/>
    <property type="evidence" value="ECO:0007669"/>
    <property type="project" value="UniProtKB-UniRule"/>
</dbReference>
<dbReference type="GO" id="GO:0000287">
    <property type="term" value="F:magnesium ion binding"/>
    <property type="evidence" value="ECO:0007669"/>
    <property type="project" value="UniProtKB-UniRule"/>
</dbReference>
<dbReference type="GO" id="GO:0009097">
    <property type="term" value="P:isoleucine biosynthetic process"/>
    <property type="evidence" value="ECO:0007669"/>
    <property type="project" value="UniProtKB-UniRule"/>
</dbReference>
<dbReference type="GO" id="GO:0009099">
    <property type="term" value="P:L-valine biosynthetic process"/>
    <property type="evidence" value="ECO:0007669"/>
    <property type="project" value="UniProtKB-UniRule"/>
</dbReference>
<dbReference type="FunFam" id="3.50.30.80:FF:000001">
    <property type="entry name" value="Dihydroxy-acid dehydratase"/>
    <property type="match status" value="1"/>
</dbReference>
<dbReference type="Gene3D" id="3.50.30.80">
    <property type="entry name" value="IlvD/EDD C-terminal domain-like"/>
    <property type="match status" value="1"/>
</dbReference>
<dbReference type="HAMAP" id="MF_00012">
    <property type="entry name" value="IlvD"/>
    <property type="match status" value="1"/>
</dbReference>
<dbReference type="InterPro" id="IPR042096">
    <property type="entry name" value="Dihydro-acid_dehy_C"/>
</dbReference>
<dbReference type="InterPro" id="IPR004404">
    <property type="entry name" value="DihydroxyA_deHydtase"/>
</dbReference>
<dbReference type="InterPro" id="IPR020558">
    <property type="entry name" value="DiOHA_6PGluconate_deHydtase_CS"/>
</dbReference>
<dbReference type="InterPro" id="IPR056740">
    <property type="entry name" value="ILV_EDD_C"/>
</dbReference>
<dbReference type="InterPro" id="IPR000581">
    <property type="entry name" value="ILV_EDD_N"/>
</dbReference>
<dbReference type="InterPro" id="IPR037237">
    <property type="entry name" value="IlvD/EDD_N"/>
</dbReference>
<dbReference type="NCBIfam" id="TIGR00110">
    <property type="entry name" value="ilvD"/>
    <property type="match status" value="1"/>
</dbReference>
<dbReference type="NCBIfam" id="NF009103">
    <property type="entry name" value="PRK12448.1"/>
    <property type="match status" value="1"/>
</dbReference>
<dbReference type="PANTHER" id="PTHR43661">
    <property type="entry name" value="D-XYLONATE DEHYDRATASE"/>
    <property type="match status" value="1"/>
</dbReference>
<dbReference type="PANTHER" id="PTHR43661:SF3">
    <property type="entry name" value="D-XYLONATE DEHYDRATASE YAGF-RELATED"/>
    <property type="match status" value="1"/>
</dbReference>
<dbReference type="Pfam" id="PF24877">
    <property type="entry name" value="ILV_EDD_C"/>
    <property type="match status" value="1"/>
</dbReference>
<dbReference type="Pfam" id="PF00920">
    <property type="entry name" value="ILVD_EDD_N"/>
    <property type="match status" value="1"/>
</dbReference>
<dbReference type="SUPFAM" id="SSF143975">
    <property type="entry name" value="IlvD/EDD N-terminal domain-like"/>
    <property type="match status" value="1"/>
</dbReference>
<dbReference type="SUPFAM" id="SSF52016">
    <property type="entry name" value="LeuD/IlvD-like"/>
    <property type="match status" value="1"/>
</dbReference>
<dbReference type="PROSITE" id="PS00886">
    <property type="entry name" value="ILVD_EDD_1"/>
    <property type="match status" value="1"/>
</dbReference>
<dbReference type="PROSITE" id="PS00887">
    <property type="entry name" value="ILVD_EDD_2"/>
    <property type="match status" value="1"/>
</dbReference>
<accession>C3MIR3</accession>